<feature type="chain" id="PRO_0000093835" description="Vacuolar amino acid transporter 2">
    <location>
        <begin position="1"/>
        <end position="480"/>
    </location>
</feature>
<feature type="transmembrane region" description="Helical" evidence="1">
    <location>
        <begin position="72"/>
        <end position="92"/>
    </location>
</feature>
<feature type="transmembrane region" description="Helical" evidence="1">
    <location>
        <begin position="95"/>
        <end position="115"/>
    </location>
</feature>
<feature type="transmembrane region" description="Helical" evidence="1">
    <location>
        <begin position="145"/>
        <end position="165"/>
    </location>
</feature>
<feature type="transmembrane region" description="Helical" evidence="1">
    <location>
        <begin position="214"/>
        <end position="234"/>
    </location>
</feature>
<feature type="transmembrane region" description="Helical" evidence="1">
    <location>
        <begin position="263"/>
        <end position="283"/>
    </location>
</feature>
<feature type="transmembrane region" description="Helical" evidence="1">
    <location>
        <begin position="297"/>
        <end position="317"/>
    </location>
</feature>
<feature type="transmembrane region" description="Helical" evidence="1">
    <location>
        <begin position="338"/>
        <end position="358"/>
    </location>
</feature>
<feature type="transmembrane region" description="Helical" evidence="1">
    <location>
        <begin position="394"/>
        <end position="414"/>
    </location>
</feature>
<feature type="transmembrane region" description="Helical" evidence="1">
    <location>
        <begin position="447"/>
        <end position="467"/>
    </location>
</feature>
<feature type="region of interest" description="Disordered" evidence="2">
    <location>
        <begin position="21"/>
        <end position="48"/>
    </location>
</feature>
<feature type="compositionally biased region" description="Polar residues" evidence="2">
    <location>
        <begin position="37"/>
        <end position="46"/>
    </location>
</feature>
<name>AVT2_YEAST</name>
<proteinExistence type="evidence at transcript level"/>
<organism>
    <name type="scientific">Saccharomyces cerevisiae (strain ATCC 204508 / S288c)</name>
    <name type="common">Baker's yeast</name>
    <dbReference type="NCBI Taxonomy" id="559292"/>
    <lineage>
        <taxon>Eukaryota</taxon>
        <taxon>Fungi</taxon>
        <taxon>Dikarya</taxon>
        <taxon>Ascomycota</taxon>
        <taxon>Saccharomycotina</taxon>
        <taxon>Saccharomycetes</taxon>
        <taxon>Saccharomycetales</taxon>
        <taxon>Saccharomycetaceae</taxon>
        <taxon>Saccharomyces</taxon>
    </lineage>
</organism>
<gene>
    <name type="primary">AVT2</name>
    <name type="ordered locus">YEL064C</name>
</gene>
<sequence>MSELGEYSKLENKELRTEFELTNFPFPGTTDNDSDDGSQGQNSLNIITPDMDDTLVNDVLRENDKKSSMRMAFMNLANSILGAGIITQPFAIKNAGILGGLLSYVALGFIVDWTLRLIVINLTLAGKRTYQGTVEHVMGKKGKLLILFTNGLFAFGGCIGYCIIIGDTIPHVLRAIFSQNDGNVHFWLRRNVIIVMVTTFISFPLSMKRNIEALSKASFLAVISMIIIVLTVVIRGPMLPYDWKGHSLKLSDFFMKATIFRSLSVISFALVCHHNTSFIFFSMRNRSVAKFTRLTHISIIISVICCALMGYSGFAVFKEKTKGNVLNSFPGTDTAINIARLCFGFNMLTTFPMEIFVLRDVVGNLLHECNLIKNYDEHTQLSGKQHVVITSSLVFITMGISLTTCNLGALFELIGATTASTMAYILPPYTNLLLTSKKKSWKERLPFYLCICFGFMIMIISSTQTIIDAVNGSDGQHCQI</sequence>
<keyword id="KW-0029">Amino-acid transport</keyword>
<keyword id="KW-0472">Membrane</keyword>
<keyword id="KW-1185">Reference proteome</keyword>
<keyword id="KW-0812">Transmembrane</keyword>
<keyword id="KW-1133">Transmembrane helix</keyword>
<keyword id="KW-0813">Transport</keyword>
<keyword id="KW-0926">Vacuole</keyword>
<evidence type="ECO:0000255" key="1"/>
<evidence type="ECO:0000256" key="2">
    <source>
        <dbReference type="SAM" id="MobiDB-lite"/>
    </source>
</evidence>
<evidence type="ECO:0000269" key="3">
    <source>
    </source>
</evidence>
<evidence type="ECO:0000305" key="4"/>
<protein>
    <recommendedName>
        <fullName>Vacuolar amino acid transporter 2</fullName>
    </recommendedName>
</protein>
<dbReference type="EMBL" id="U18795">
    <property type="protein sequence ID" value="AAB65023.1"/>
    <property type="molecule type" value="Genomic_DNA"/>
</dbReference>
<dbReference type="EMBL" id="AY899246">
    <property type="protein sequence ID" value="AAX83931.1"/>
    <property type="molecule type" value="mRNA"/>
</dbReference>
<dbReference type="EMBL" id="BK006939">
    <property type="protein sequence ID" value="DAA07590.1"/>
    <property type="molecule type" value="Genomic_DNA"/>
</dbReference>
<dbReference type="PIR" id="S50525">
    <property type="entry name" value="S50525"/>
</dbReference>
<dbReference type="RefSeq" id="NP_010850.1">
    <property type="nucleotide sequence ID" value="NM_001178879.1"/>
</dbReference>
<dbReference type="SMR" id="P39981"/>
<dbReference type="BioGRID" id="36665">
    <property type="interactions" value="15"/>
</dbReference>
<dbReference type="DIP" id="DIP-5166N"/>
<dbReference type="FunCoup" id="P39981">
    <property type="interactions" value="162"/>
</dbReference>
<dbReference type="IntAct" id="P39981">
    <property type="interactions" value="3"/>
</dbReference>
<dbReference type="STRING" id="4932.YEL064C"/>
<dbReference type="TCDB" id="2.A.18.6.20">
    <property type="family name" value="the amino acid/auxin permease (aaap) family"/>
</dbReference>
<dbReference type="iPTMnet" id="P39981"/>
<dbReference type="PaxDb" id="4932-YEL064C"/>
<dbReference type="PeptideAtlas" id="P39981"/>
<dbReference type="EnsemblFungi" id="YEL064C_mRNA">
    <property type="protein sequence ID" value="YEL064C"/>
    <property type="gene ID" value="YEL064C"/>
</dbReference>
<dbReference type="GeneID" id="856645"/>
<dbReference type="KEGG" id="sce:YEL064C"/>
<dbReference type="AGR" id="SGD:S000000790"/>
<dbReference type="SGD" id="S000000790">
    <property type="gene designation" value="AVT2"/>
</dbReference>
<dbReference type="VEuPathDB" id="FungiDB:YEL064C"/>
<dbReference type="eggNOG" id="KOG1305">
    <property type="taxonomic scope" value="Eukaryota"/>
</dbReference>
<dbReference type="GeneTree" id="ENSGT00940000157782"/>
<dbReference type="HOGENOM" id="CLU_009020_4_1_1"/>
<dbReference type="InParanoid" id="P39981"/>
<dbReference type="OMA" id="FLFFGSQ"/>
<dbReference type="OrthoDB" id="28208at2759"/>
<dbReference type="BioCyc" id="YEAST:G3O-30179-MONOMER"/>
<dbReference type="Reactome" id="R-SCE-210455">
    <property type="pathway name" value="Astrocytic Glutamate-Glutamine Uptake And Metabolism"/>
</dbReference>
<dbReference type="Reactome" id="R-SCE-210500">
    <property type="pathway name" value="Glutamate Neurotransmitter Release Cycle"/>
</dbReference>
<dbReference type="Reactome" id="R-SCE-352230">
    <property type="pathway name" value="Amino acid transport across the plasma membrane"/>
</dbReference>
<dbReference type="BioGRID-ORCS" id="856645">
    <property type="hits" value="6 hits in 10 CRISPR screens"/>
</dbReference>
<dbReference type="PRO" id="PR:P39981"/>
<dbReference type="Proteomes" id="UP000002311">
    <property type="component" value="Chromosome V"/>
</dbReference>
<dbReference type="RNAct" id="P39981">
    <property type="molecule type" value="protein"/>
</dbReference>
<dbReference type="GO" id="GO:0005783">
    <property type="term" value="C:endoplasmic reticulum"/>
    <property type="evidence" value="ECO:0000314"/>
    <property type="project" value="SGD"/>
</dbReference>
<dbReference type="GO" id="GO:0016020">
    <property type="term" value="C:membrane"/>
    <property type="evidence" value="ECO:0000318"/>
    <property type="project" value="GO_Central"/>
</dbReference>
<dbReference type="GO" id="GO:0005774">
    <property type="term" value="C:vacuolar membrane"/>
    <property type="evidence" value="ECO:0007669"/>
    <property type="project" value="UniProtKB-SubCell"/>
</dbReference>
<dbReference type="GO" id="GO:0015179">
    <property type="term" value="F:L-amino acid transmembrane transporter activity"/>
    <property type="evidence" value="ECO:0000318"/>
    <property type="project" value="GO_Central"/>
</dbReference>
<dbReference type="GO" id="GO:0003333">
    <property type="term" value="P:amino acid transmembrane transport"/>
    <property type="evidence" value="ECO:0000318"/>
    <property type="project" value="GO_Central"/>
</dbReference>
<dbReference type="InterPro" id="IPR013057">
    <property type="entry name" value="AA_transpt_TM"/>
</dbReference>
<dbReference type="PANTHER" id="PTHR22950">
    <property type="entry name" value="AMINO ACID TRANSPORTER"/>
    <property type="match status" value="1"/>
</dbReference>
<dbReference type="PANTHER" id="PTHR22950:SF458">
    <property type="entry name" value="SODIUM-COUPLED NEUTRAL AMINO ACID TRANSPORTER 11-RELATED"/>
    <property type="match status" value="1"/>
</dbReference>
<dbReference type="Pfam" id="PF01490">
    <property type="entry name" value="Aa_trans"/>
    <property type="match status" value="1"/>
</dbReference>
<reference key="1">
    <citation type="journal article" date="1997" name="Nature">
        <title>The nucleotide sequence of Saccharomyces cerevisiae chromosome V.</title>
        <authorList>
            <person name="Dietrich F.S."/>
            <person name="Mulligan J.T."/>
            <person name="Hennessy K.M."/>
            <person name="Yelton M.A."/>
            <person name="Allen E."/>
            <person name="Araujo R."/>
            <person name="Aviles E."/>
            <person name="Berno A."/>
            <person name="Brennan T."/>
            <person name="Carpenter J."/>
            <person name="Chen E."/>
            <person name="Cherry J.M."/>
            <person name="Chung E."/>
            <person name="Duncan M."/>
            <person name="Guzman E."/>
            <person name="Hartzell G."/>
            <person name="Hunicke-Smith S."/>
            <person name="Hyman R.W."/>
            <person name="Kayser A."/>
            <person name="Komp C."/>
            <person name="Lashkari D."/>
            <person name="Lew H."/>
            <person name="Lin D."/>
            <person name="Mosedale D."/>
            <person name="Nakahara K."/>
            <person name="Namath A."/>
            <person name="Norgren R."/>
            <person name="Oefner P."/>
            <person name="Oh C."/>
            <person name="Petel F.X."/>
            <person name="Roberts D."/>
            <person name="Sehl P."/>
            <person name="Schramm S."/>
            <person name="Shogren T."/>
            <person name="Smith V."/>
            <person name="Taylor P."/>
            <person name="Wei Y."/>
            <person name="Botstein D."/>
            <person name="Davis R.W."/>
        </authorList>
    </citation>
    <scope>NUCLEOTIDE SEQUENCE [LARGE SCALE GENOMIC DNA]</scope>
    <source>
        <strain>ATCC 204508 / S288c</strain>
    </source>
</reference>
<reference key="2">
    <citation type="journal article" date="2014" name="G3 (Bethesda)">
        <title>The reference genome sequence of Saccharomyces cerevisiae: Then and now.</title>
        <authorList>
            <person name="Engel S.R."/>
            <person name="Dietrich F.S."/>
            <person name="Fisk D.G."/>
            <person name="Binkley G."/>
            <person name="Balakrishnan R."/>
            <person name="Costanzo M.C."/>
            <person name="Dwight S.S."/>
            <person name="Hitz B.C."/>
            <person name="Karra K."/>
            <person name="Nash R.S."/>
            <person name="Weng S."/>
            <person name="Wong E.D."/>
            <person name="Lloyd P."/>
            <person name="Skrzypek M.S."/>
            <person name="Miyasato S.R."/>
            <person name="Simison M."/>
            <person name="Cherry J.M."/>
        </authorList>
    </citation>
    <scope>GENOME REANNOTATION</scope>
    <source>
        <strain>ATCC 204508 / S288c</strain>
    </source>
</reference>
<reference key="3">
    <citation type="journal article" date="2005" name="Nucleic Acids Res.">
        <title>Mapping of transcription start sites in Saccharomyces cerevisiae using 5' SAGE.</title>
        <authorList>
            <person name="Zhang Z."/>
            <person name="Dietrich F.S."/>
        </authorList>
    </citation>
    <scope>NUCLEOTIDE SEQUENCE [MRNA] OF 1-94</scope>
    <source>
        <strain>ATCC 208353 / W303-1A</strain>
    </source>
</reference>
<reference key="4">
    <citation type="journal article" date="2001" name="J. Biol. Chem.">
        <title>A family of yeast proteins mediating bidirectional vacuolar amino acid transport.</title>
        <authorList>
            <person name="Russnak R."/>
            <person name="Konczal D."/>
            <person name="McIntire S.L."/>
        </authorList>
    </citation>
    <scope>FUNCTION</scope>
    <scope>SUBCELLULAR LOCATION</scope>
</reference>
<accession>P39981</accession>
<accession>D3DLI6</accession>
<accession>Q2VQX2</accession>
<comment type="function">
    <text evidence="3">Probable amino acid transporter of unknown specificity.</text>
</comment>
<comment type="subcellular location">
    <subcellularLocation>
        <location evidence="3">Vacuole membrane</location>
        <topology evidence="3">Multi-pass membrane protein</topology>
    </subcellularLocation>
</comment>
<comment type="similarity">
    <text evidence="4">Belongs to the amino acid/polyamine transporter 2 family.</text>
</comment>